<evidence type="ECO:0000255" key="1"/>
<evidence type="ECO:0000255" key="2">
    <source>
        <dbReference type="PROSITE-ProRule" id="PRU00498"/>
    </source>
</evidence>
<evidence type="ECO:0000256" key="3">
    <source>
        <dbReference type="SAM" id="MobiDB-lite"/>
    </source>
</evidence>
<evidence type="ECO:0000269" key="4">
    <source>
    </source>
</evidence>
<evidence type="ECO:0000303" key="5">
    <source>
    </source>
</evidence>
<evidence type="ECO:0000305" key="6"/>
<evidence type="ECO:0000305" key="7">
    <source>
    </source>
</evidence>
<feature type="chain" id="PRO_0000446591" description="MFS-type transporter ptmT">
    <location>
        <begin position="1"/>
        <end position="570"/>
    </location>
</feature>
<feature type="transmembrane region" description="Helical" evidence="1">
    <location>
        <begin position="50"/>
        <end position="70"/>
    </location>
</feature>
<feature type="transmembrane region" description="Helical" evidence="1">
    <location>
        <begin position="94"/>
        <end position="114"/>
    </location>
</feature>
<feature type="transmembrane region" description="Helical" evidence="1">
    <location>
        <begin position="121"/>
        <end position="141"/>
    </location>
</feature>
<feature type="transmembrane region" description="Helical" evidence="1">
    <location>
        <begin position="151"/>
        <end position="171"/>
    </location>
</feature>
<feature type="transmembrane region" description="Helical" evidence="1">
    <location>
        <begin position="182"/>
        <end position="202"/>
    </location>
</feature>
<feature type="transmembrane region" description="Helical" evidence="1">
    <location>
        <begin position="210"/>
        <end position="230"/>
    </location>
</feature>
<feature type="transmembrane region" description="Helical" evidence="1">
    <location>
        <begin position="247"/>
        <end position="267"/>
    </location>
</feature>
<feature type="transmembrane region" description="Helical" evidence="1">
    <location>
        <begin position="278"/>
        <end position="298"/>
    </location>
</feature>
<feature type="transmembrane region" description="Helical" evidence="1">
    <location>
        <begin position="323"/>
        <end position="343"/>
    </location>
</feature>
<feature type="transmembrane region" description="Helical" evidence="1">
    <location>
        <begin position="356"/>
        <end position="376"/>
    </location>
</feature>
<feature type="transmembrane region" description="Helical" evidence="1">
    <location>
        <begin position="379"/>
        <end position="399"/>
    </location>
</feature>
<feature type="transmembrane region" description="Helical" evidence="1">
    <location>
        <begin position="413"/>
        <end position="433"/>
    </location>
</feature>
<feature type="transmembrane region" description="Helical" evidence="1">
    <location>
        <begin position="445"/>
        <end position="465"/>
    </location>
</feature>
<feature type="transmembrane region" description="Helical" evidence="1">
    <location>
        <begin position="517"/>
        <end position="537"/>
    </location>
</feature>
<feature type="region of interest" description="Disordered" evidence="3">
    <location>
        <begin position="1"/>
        <end position="34"/>
    </location>
</feature>
<feature type="region of interest" description="Disordered" evidence="3">
    <location>
        <begin position="550"/>
        <end position="570"/>
    </location>
</feature>
<feature type="compositionally biased region" description="Polar residues" evidence="3">
    <location>
        <begin position="1"/>
        <end position="11"/>
    </location>
</feature>
<feature type="compositionally biased region" description="Basic and acidic residues" evidence="3">
    <location>
        <begin position="561"/>
        <end position="570"/>
    </location>
</feature>
<feature type="glycosylation site" description="N-linked (GlcNAc...) asparagine" evidence="2">
    <location>
        <position position="541"/>
    </location>
</feature>
<gene>
    <name evidence="5" type="primary">ptmT</name>
</gene>
<sequence>MPDSGNIQLDTLQHKDHSQETTSHYEGGSQLPEQESLDTNIQDDSVEYPGLIRVILITMGVALCSFCVGLDNTILATAIPKITSEFNSLEDMSWYVSAYLLVTSAFILSFGKIYTYYSVKWTYLISLGLFELGSLICAITPSSAGLIVGRAISGLGSAGLFPGSVIILSNIAPLHQRPLLTAFIGIMSGIATVTGPILGGVFTDRLSWRWCFYINLPIGGVTAVVVFLFMKTMKVKKNVPTSQKIKGLDWIGTAVFIPAIVSLLLALQWGGARYNWQNVRIIMLFIIAGVLGMVWLLIQRWKKEEATIPPRLMQRRSVVGTCIYTIPFVGCVIVLGYYLPIWFQSVKGVSASQSGIMNLPTVVGTIVVGLLSSVLIMRVGYMMPFLVLGSVMLAVGAGLCSTFQRSSGSAEWIGYQAMIGMGAGLGYQLPLLVVQADVPAADVPVATAVVIFMQNLAGSIFSAIAQTVFQNQLANSVQILAPSVNPESILDGGTVDLSDRFPSDVLPSILQAYNTAVTHTFYAGVAAASLSVFGAFIVRWNVSVKKKVPPEPLVPGGSHSGAERDSKNGT</sequence>
<proteinExistence type="inferred from homology"/>
<keyword id="KW-1003">Cell membrane</keyword>
<keyword id="KW-0325">Glycoprotein</keyword>
<keyword id="KW-0472">Membrane</keyword>
<keyword id="KW-0812">Transmembrane</keyword>
<keyword id="KW-1133">Transmembrane helix</keyword>
<keyword id="KW-0813">Transport</keyword>
<comment type="function">
    <text evidence="4 7">MFS-type transporter; part of the gene cluster that mediates the biosynthesis of the indole diterpenes penitrems (PubMed:25831977). May be involved in the efflux of penitrems (Probable).</text>
</comment>
<comment type="subcellular location">
    <subcellularLocation>
        <location evidence="6">Cell membrane</location>
        <topology evidence="1">Multi-pass membrane protein</topology>
    </subcellularLocation>
</comment>
<comment type="similarity">
    <text evidence="6">Belongs to the major facilitator superfamily. TCR/Tet family.</text>
</comment>
<dbReference type="EMBL" id="LC027936">
    <property type="protein sequence ID" value="BAU61550.1"/>
    <property type="molecule type" value="Genomic_DNA"/>
</dbReference>
<dbReference type="SMR" id="A0A140JWS3"/>
<dbReference type="GlyCosmos" id="A0A140JWS3">
    <property type="glycosylation" value="1 site, No reported glycans"/>
</dbReference>
<dbReference type="GO" id="GO:0005886">
    <property type="term" value="C:plasma membrane"/>
    <property type="evidence" value="ECO:0007669"/>
    <property type="project" value="UniProtKB-SubCell"/>
</dbReference>
<dbReference type="GO" id="GO:0022857">
    <property type="term" value="F:transmembrane transporter activity"/>
    <property type="evidence" value="ECO:0007669"/>
    <property type="project" value="InterPro"/>
</dbReference>
<dbReference type="CDD" id="cd17502">
    <property type="entry name" value="MFS_Azr1_MDR_like"/>
    <property type="match status" value="1"/>
</dbReference>
<dbReference type="FunFam" id="1.20.1250.20:FF:000196">
    <property type="entry name" value="MFS toxin efflux pump (AflT)"/>
    <property type="match status" value="1"/>
</dbReference>
<dbReference type="FunFam" id="1.20.1720.10:FF:000012">
    <property type="entry name" value="MFS toxin efflux pump (AflT)"/>
    <property type="match status" value="1"/>
</dbReference>
<dbReference type="Gene3D" id="1.20.1250.20">
    <property type="entry name" value="MFS general substrate transporter like domains"/>
    <property type="match status" value="2"/>
</dbReference>
<dbReference type="InterPro" id="IPR011701">
    <property type="entry name" value="MFS"/>
</dbReference>
<dbReference type="InterPro" id="IPR020846">
    <property type="entry name" value="MFS_dom"/>
</dbReference>
<dbReference type="InterPro" id="IPR036259">
    <property type="entry name" value="MFS_trans_sf"/>
</dbReference>
<dbReference type="PANTHER" id="PTHR23501">
    <property type="entry name" value="MAJOR FACILITATOR SUPERFAMILY"/>
    <property type="match status" value="1"/>
</dbReference>
<dbReference type="PANTHER" id="PTHR23501:SF199">
    <property type="entry name" value="MFS EFFLUX TRANSPORTER INPD-RELATED"/>
    <property type="match status" value="1"/>
</dbReference>
<dbReference type="Pfam" id="PF07690">
    <property type="entry name" value="MFS_1"/>
    <property type="match status" value="2"/>
</dbReference>
<dbReference type="SUPFAM" id="SSF103473">
    <property type="entry name" value="MFS general substrate transporter"/>
    <property type="match status" value="1"/>
</dbReference>
<dbReference type="PROSITE" id="PS50850">
    <property type="entry name" value="MFS"/>
    <property type="match status" value="1"/>
</dbReference>
<reference key="1">
    <citation type="journal article" date="2015" name="Angew. Chem. Int. Ed.">
        <title>Reconstitution of biosynthetic machinery for the synthesis of the highly elaborated indole diterpene penitrem.</title>
        <authorList>
            <person name="Liu C."/>
            <person name="Tagami K."/>
            <person name="Minami A."/>
            <person name="Matsumoto T."/>
            <person name="Frisvad J.C."/>
            <person name="Suzuki H."/>
            <person name="Ishikawa J."/>
            <person name="Gomi K."/>
            <person name="Oikawa H."/>
        </authorList>
    </citation>
    <scope>NUCLEOTIDE SEQUENCE [GENOMIC DNA]</scope>
    <scope>IDENTIFICATION</scope>
    <scope>FUNCTION</scope>
    <source>
        <strain>ATCC 90288 / AK-40</strain>
    </source>
</reference>
<organism>
    <name type="scientific">Penicillium ochrochloron</name>
    <dbReference type="NCBI Taxonomy" id="69780"/>
    <lineage>
        <taxon>Eukaryota</taxon>
        <taxon>Fungi</taxon>
        <taxon>Dikarya</taxon>
        <taxon>Ascomycota</taxon>
        <taxon>Pezizomycotina</taxon>
        <taxon>Eurotiomycetes</taxon>
        <taxon>Eurotiomycetidae</taxon>
        <taxon>Eurotiales</taxon>
        <taxon>Aspergillaceae</taxon>
        <taxon>Penicillium</taxon>
    </lineage>
</organism>
<name>PTMT_PENOH</name>
<accession>A0A140JWS3</accession>
<protein>
    <recommendedName>
        <fullName evidence="5">MFS-type transporter ptmT</fullName>
    </recommendedName>
    <alternativeName>
        <fullName evidence="5">Penitrem biosynthesis cluster 1 protein T</fullName>
    </alternativeName>
</protein>